<accession>A8GQL8</accession>
<gene>
    <name evidence="1" type="primary">rsmG</name>
    <name type="ordered locus">A1G_00535</name>
</gene>
<sequence>MEVPREIIEKLEIFQKLVKKWNKSINLVSDNTIHNFWQRHILDSLQLIQYIDNKEIHLVDIGSGAGLPGIVLSIAGVAQVSLIEADLRKCIFLEKASKISNNNVQIINQRIEKVEIDCSILTCRAFSNLNTIFNCIKNISVREKFLLLKGKNYLTEIVEAKERWLFGYLIHQSITCEEGKILEVSNLTKMI</sequence>
<dbReference type="EC" id="2.1.1.170" evidence="1"/>
<dbReference type="EMBL" id="CP000848">
    <property type="protein sequence ID" value="ABV75693.1"/>
    <property type="molecule type" value="Genomic_DNA"/>
</dbReference>
<dbReference type="SMR" id="A8GQL8"/>
<dbReference type="KEGG" id="rri:A1G_00535"/>
<dbReference type="HOGENOM" id="CLU_065341_1_1_5"/>
<dbReference type="Proteomes" id="UP000006832">
    <property type="component" value="Chromosome"/>
</dbReference>
<dbReference type="GO" id="GO:0005829">
    <property type="term" value="C:cytosol"/>
    <property type="evidence" value="ECO:0007669"/>
    <property type="project" value="TreeGrafter"/>
</dbReference>
<dbReference type="GO" id="GO:0070043">
    <property type="term" value="F:rRNA (guanine-N7-)-methyltransferase activity"/>
    <property type="evidence" value="ECO:0007669"/>
    <property type="project" value="UniProtKB-UniRule"/>
</dbReference>
<dbReference type="Gene3D" id="3.40.50.150">
    <property type="entry name" value="Vaccinia Virus protein VP39"/>
    <property type="match status" value="1"/>
</dbReference>
<dbReference type="HAMAP" id="MF_00074">
    <property type="entry name" value="16SrRNA_methyltr_G"/>
    <property type="match status" value="1"/>
</dbReference>
<dbReference type="InterPro" id="IPR003682">
    <property type="entry name" value="rRNA_ssu_MeTfrase_G"/>
</dbReference>
<dbReference type="InterPro" id="IPR029063">
    <property type="entry name" value="SAM-dependent_MTases_sf"/>
</dbReference>
<dbReference type="NCBIfam" id="TIGR00138">
    <property type="entry name" value="rsmG_gidB"/>
    <property type="match status" value="1"/>
</dbReference>
<dbReference type="PANTHER" id="PTHR31760">
    <property type="entry name" value="S-ADENOSYL-L-METHIONINE-DEPENDENT METHYLTRANSFERASES SUPERFAMILY PROTEIN"/>
    <property type="match status" value="1"/>
</dbReference>
<dbReference type="PANTHER" id="PTHR31760:SF0">
    <property type="entry name" value="S-ADENOSYL-L-METHIONINE-DEPENDENT METHYLTRANSFERASES SUPERFAMILY PROTEIN"/>
    <property type="match status" value="1"/>
</dbReference>
<dbReference type="Pfam" id="PF02527">
    <property type="entry name" value="GidB"/>
    <property type="match status" value="1"/>
</dbReference>
<dbReference type="PIRSF" id="PIRSF003078">
    <property type="entry name" value="GidB"/>
    <property type="match status" value="1"/>
</dbReference>
<dbReference type="SUPFAM" id="SSF53335">
    <property type="entry name" value="S-adenosyl-L-methionine-dependent methyltransferases"/>
    <property type="match status" value="1"/>
</dbReference>
<protein>
    <recommendedName>
        <fullName evidence="1">Ribosomal RNA small subunit methyltransferase G</fullName>
        <ecNumber evidence="1">2.1.1.170</ecNumber>
    </recommendedName>
    <alternativeName>
        <fullName evidence="1">16S rRNA 7-methylguanosine methyltransferase</fullName>
        <shortName evidence="1">16S rRNA m7G methyltransferase</shortName>
    </alternativeName>
</protein>
<proteinExistence type="inferred from homology"/>
<reference key="1">
    <citation type="submission" date="2007-09" db="EMBL/GenBank/DDBJ databases">
        <title>Complete genome sequence of Rickettsia rickettsii.</title>
        <authorList>
            <person name="Madan A."/>
            <person name="Fahey J."/>
            <person name="Helton E."/>
            <person name="Ketteman M."/>
            <person name="Madan A."/>
            <person name="Rodrigues S."/>
            <person name="Sanchez A."/>
            <person name="Dasch G."/>
            <person name="Eremeeva M."/>
        </authorList>
    </citation>
    <scope>NUCLEOTIDE SEQUENCE [LARGE SCALE GENOMIC DNA]</scope>
    <source>
        <strain>Sheila Smith</strain>
    </source>
</reference>
<comment type="function">
    <text evidence="1">Specifically methylates the N7 position of guanine in position 527 of 16S rRNA.</text>
</comment>
<comment type="catalytic activity">
    <reaction evidence="1">
        <text>guanosine(527) in 16S rRNA + S-adenosyl-L-methionine = N(7)-methylguanosine(527) in 16S rRNA + S-adenosyl-L-homocysteine</text>
        <dbReference type="Rhea" id="RHEA:42732"/>
        <dbReference type="Rhea" id="RHEA-COMP:10209"/>
        <dbReference type="Rhea" id="RHEA-COMP:10210"/>
        <dbReference type="ChEBI" id="CHEBI:57856"/>
        <dbReference type="ChEBI" id="CHEBI:59789"/>
        <dbReference type="ChEBI" id="CHEBI:74269"/>
        <dbReference type="ChEBI" id="CHEBI:74480"/>
        <dbReference type="EC" id="2.1.1.170"/>
    </reaction>
</comment>
<comment type="subcellular location">
    <subcellularLocation>
        <location evidence="1">Cytoplasm</location>
    </subcellularLocation>
</comment>
<comment type="similarity">
    <text evidence="1">Belongs to the methyltransferase superfamily. RNA methyltransferase RsmG family.</text>
</comment>
<organism>
    <name type="scientific">Rickettsia rickettsii (strain Sheila Smith)</name>
    <dbReference type="NCBI Taxonomy" id="392021"/>
    <lineage>
        <taxon>Bacteria</taxon>
        <taxon>Pseudomonadati</taxon>
        <taxon>Pseudomonadota</taxon>
        <taxon>Alphaproteobacteria</taxon>
        <taxon>Rickettsiales</taxon>
        <taxon>Rickettsiaceae</taxon>
        <taxon>Rickettsieae</taxon>
        <taxon>Rickettsia</taxon>
        <taxon>spotted fever group</taxon>
    </lineage>
</organism>
<feature type="chain" id="PRO_1000010197" description="Ribosomal RNA small subunit methyltransferase G">
    <location>
        <begin position="1"/>
        <end position="191"/>
    </location>
</feature>
<feature type="binding site" evidence="1">
    <location>
        <position position="62"/>
    </location>
    <ligand>
        <name>S-adenosyl-L-methionine</name>
        <dbReference type="ChEBI" id="CHEBI:59789"/>
    </ligand>
</feature>
<feature type="binding site" evidence="1">
    <location>
        <position position="67"/>
    </location>
    <ligand>
        <name>S-adenosyl-L-methionine</name>
        <dbReference type="ChEBI" id="CHEBI:59789"/>
    </ligand>
</feature>
<feature type="binding site" evidence="1">
    <location>
        <begin position="111"/>
        <end position="112"/>
    </location>
    <ligand>
        <name>S-adenosyl-L-methionine</name>
        <dbReference type="ChEBI" id="CHEBI:59789"/>
    </ligand>
</feature>
<feature type="binding site" evidence="1">
    <location>
        <position position="124"/>
    </location>
    <ligand>
        <name>S-adenosyl-L-methionine</name>
        <dbReference type="ChEBI" id="CHEBI:59789"/>
    </ligand>
</feature>
<evidence type="ECO:0000255" key="1">
    <source>
        <dbReference type="HAMAP-Rule" id="MF_00074"/>
    </source>
</evidence>
<keyword id="KW-0963">Cytoplasm</keyword>
<keyword id="KW-0489">Methyltransferase</keyword>
<keyword id="KW-0698">rRNA processing</keyword>
<keyword id="KW-0949">S-adenosyl-L-methionine</keyword>
<keyword id="KW-0808">Transferase</keyword>
<name>RSMG_RICRS</name>